<feature type="chain" id="PRO_0000387231" description="Probable inorganic carbon transporter subunit DabA">
    <location>
        <begin position="1"/>
        <end position="1007"/>
    </location>
</feature>
<feature type="binding site" evidence="1">
    <location>
        <position position="442"/>
    </location>
    <ligand>
        <name>Zn(2+)</name>
        <dbReference type="ChEBI" id="CHEBI:29105"/>
    </ligand>
</feature>
<feature type="binding site" evidence="1">
    <location>
        <position position="444"/>
    </location>
    <ligand>
        <name>Zn(2+)</name>
        <dbReference type="ChEBI" id="CHEBI:29105"/>
    </ligand>
</feature>
<feature type="binding site" evidence="1">
    <location>
        <position position="696"/>
    </location>
    <ligand>
        <name>Zn(2+)</name>
        <dbReference type="ChEBI" id="CHEBI:29105"/>
    </ligand>
</feature>
<feature type="binding site" evidence="1">
    <location>
        <position position="711"/>
    </location>
    <ligand>
        <name>Zn(2+)</name>
        <dbReference type="ChEBI" id="CHEBI:29105"/>
    </ligand>
</feature>
<protein>
    <recommendedName>
        <fullName evidence="1">Probable inorganic carbon transporter subunit DabA</fullName>
    </recommendedName>
</protein>
<organism>
    <name type="scientific">Aquifex aeolicus (strain VF5)</name>
    <dbReference type="NCBI Taxonomy" id="224324"/>
    <lineage>
        <taxon>Bacteria</taxon>
        <taxon>Pseudomonadati</taxon>
        <taxon>Aquificota</taxon>
        <taxon>Aquificia</taxon>
        <taxon>Aquificales</taxon>
        <taxon>Aquificaceae</taxon>
        <taxon>Aquifex</taxon>
    </lineage>
</organism>
<comment type="function">
    <text evidence="1">Part of an energy-coupled inorganic carbon pump.</text>
</comment>
<comment type="cofactor">
    <cofactor evidence="1">
        <name>Zn(2+)</name>
        <dbReference type="ChEBI" id="CHEBI:29105"/>
    </cofactor>
</comment>
<comment type="subunit">
    <text evidence="1">Forms a complex with DabB.</text>
</comment>
<comment type="subcellular location">
    <subcellularLocation>
        <location evidence="1">Cell inner membrane</location>
        <topology evidence="1">Peripheral membrane protein</topology>
    </subcellularLocation>
</comment>
<comment type="similarity">
    <text evidence="1">Belongs to the inorganic carbon transporter (TC 9.A.2) DabA family.</text>
</comment>
<accession>O67026</accession>
<sequence>MELGRKLYIRSLVNVAGEPLSYFWPMRNFVYHNPLHELEGEHFSKAIKEGEEIFKGRAFLRRKDYIDFLNKGLIKEEKLLNSLKENVNLEGAPLTYEDLLRLIKDEKLKVYENTYLIREADTDLVEKLKGFFSENPKEVMENLFSEFGKKYTIADFVDLFFGESVNRTVNELLIKLSLDFLDEGQSVVEMPRRKEGFFRAFRELAKYNLRFIIRGGRELGELMESFEEPEEAIDNILKSYGIPEELWERYITLELAKLKGIAGYIKWRSHNKHYYFQRVYPSDLVEFLAVRLILEKGILEHRKKVYPFEPTYENFKRFFEEKIEEAFLTYEYATKRVPAELSSQVRENLKNAESFINTYLSRKAHINASNFALFLKDWLGERVKELSKEELKKVLEIYGEFQEKEGFIWLEALEDSLIERLTEGVLRANQEKEKPKAQALFCIDVRSERYRRNLEKIGNYETYGIAGFFGVPMAFVEIHKGHEEFLCPVLIKPRNVVLEIPKEMKEEYEVTHLLEHILHDLKQNVLTPYVTVEAIGFLFGFDFIGKTFMPYSYSKLKEKLLESKENVDYIINKPSREEVKELVNRVYETILKRVFEHEYGIKNPEKPLLEETLKVCLGETDYSERLELYGFKGEKQREFIERLRKVYKVDRGYWNILFERLSKLGFTLDEQASLIGRALKMVGLTEFAPFVFIIGHGSKSDNNPYESALDCGACGGASGLYNAIVFCRMANNPEVRKRIKEKFGINIPENTYFVPGLHNTTTDEVHFYDLEQFPQEVKEKLKEIKEDFDKASMLTASERYKELFDEEAEDELRKIYKVVENAYDWSQVRPEWGLSGNYAFVIGRRELTKHLNLEGKVFLHSYDYRVDRRGFLLEVILSGPAIVGQWINMEYYFSTTDNEVYGSGSKVYHNVVGRFGVISGNFSDLRTGLPTQTVYKEGKPLHIPARLIILLEAPYEFALSVINRVYAIRNLIQNEWVNFVIFDPESKKFYRYKKGSWNELKTEVKDG</sequence>
<name>DABA_AQUAE</name>
<reference key="1">
    <citation type="journal article" date="1998" name="Nature">
        <title>The complete genome of the hyperthermophilic bacterium Aquifex aeolicus.</title>
        <authorList>
            <person name="Deckert G."/>
            <person name="Warren P.V."/>
            <person name="Gaasterland T."/>
            <person name="Young W.G."/>
            <person name="Lenox A.L."/>
            <person name="Graham D.E."/>
            <person name="Overbeek R."/>
            <person name="Snead M.A."/>
            <person name="Keller M."/>
            <person name="Aujay M."/>
            <person name="Huber R."/>
            <person name="Feldman R.A."/>
            <person name="Short J.M."/>
            <person name="Olsen G.J."/>
            <person name="Swanson R.V."/>
        </authorList>
    </citation>
    <scope>NUCLEOTIDE SEQUENCE [LARGE SCALE GENOMIC DNA]</scope>
    <source>
        <strain>VF5</strain>
    </source>
</reference>
<keyword id="KW-0997">Cell inner membrane</keyword>
<keyword id="KW-1003">Cell membrane</keyword>
<keyword id="KW-0472">Membrane</keyword>
<keyword id="KW-0479">Metal-binding</keyword>
<keyword id="KW-1185">Reference proteome</keyword>
<keyword id="KW-0813">Transport</keyword>
<keyword id="KW-0862">Zinc</keyword>
<proteinExistence type="inferred from homology"/>
<evidence type="ECO:0000255" key="1">
    <source>
        <dbReference type="HAMAP-Rule" id="MF_01871"/>
    </source>
</evidence>
<dbReference type="EMBL" id="AE000657">
    <property type="protein sequence ID" value="AAC06994.1"/>
    <property type="molecule type" value="Genomic_DNA"/>
</dbReference>
<dbReference type="PIR" id="G70374">
    <property type="entry name" value="G70374"/>
</dbReference>
<dbReference type="RefSeq" id="NP_213587.1">
    <property type="nucleotide sequence ID" value="NC_000918.1"/>
</dbReference>
<dbReference type="RefSeq" id="WP_010880525.1">
    <property type="nucleotide sequence ID" value="NC_000918.1"/>
</dbReference>
<dbReference type="SMR" id="O67026"/>
<dbReference type="STRING" id="224324.aq_863"/>
<dbReference type="EnsemblBacteria" id="AAC06994">
    <property type="protein sequence ID" value="AAC06994"/>
    <property type="gene ID" value="aq_863"/>
</dbReference>
<dbReference type="KEGG" id="aae:aq_863"/>
<dbReference type="PATRIC" id="fig|224324.8.peg.675"/>
<dbReference type="eggNOG" id="COG3002">
    <property type="taxonomic scope" value="Bacteria"/>
</dbReference>
<dbReference type="HOGENOM" id="CLU_009885_0_0_0"/>
<dbReference type="InParanoid" id="O67026"/>
<dbReference type="OrthoDB" id="9805101at2"/>
<dbReference type="Proteomes" id="UP000000798">
    <property type="component" value="Chromosome"/>
</dbReference>
<dbReference type="GO" id="GO:0005886">
    <property type="term" value="C:plasma membrane"/>
    <property type="evidence" value="ECO:0007669"/>
    <property type="project" value="UniProtKB-SubCell"/>
</dbReference>
<dbReference type="GO" id="GO:0008270">
    <property type="term" value="F:zinc ion binding"/>
    <property type="evidence" value="ECO:0007669"/>
    <property type="project" value="UniProtKB-UniRule"/>
</dbReference>
<dbReference type="HAMAP" id="MF_01871">
    <property type="entry name" value="DabA"/>
    <property type="match status" value="1"/>
</dbReference>
<dbReference type="InterPro" id="IPR018752">
    <property type="entry name" value="DabA"/>
</dbReference>
<dbReference type="PANTHER" id="PTHR38344:SF1">
    <property type="entry name" value="INORGANIC CARBON TRANSPORTER SUBUNIT DABA-RELATED"/>
    <property type="match status" value="1"/>
</dbReference>
<dbReference type="PANTHER" id="PTHR38344">
    <property type="entry name" value="UPF0753 PROTEIN AQ_863"/>
    <property type="match status" value="1"/>
</dbReference>
<dbReference type="Pfam" id="PF10070">
    <property type="entry name" value="DabA"/>
    <property type="match status" value="1"/>
</dbReference>
<gene>
    <name evidence="1" type="primary">dabA</name>
    <name type="ordered locus">aq_863</name>
</gene>